<name>NU4LM_PLAHE</name>
<geneLocation type="mitochondrion"/>
<dbReference type="EC" id="7.1.1.2"/>
<dbReference type="EMBL" id="DQ312381">
    <property type="protein sequence ID" value="ABC47559.1"/>
    <property type="molecule type" value="Genomic_DNA"/>
</dbReference>
<dbReference type="SMR" id="Q1HV02"/>
<dbReference type="GO" id="GO:0005743">
    <property type="term" value="C:mitochondrial inner membrane"/>
    <property type="evidence" value="ECO:0000250"/>
    <property type="project" value="UniProtKB"/>
</dbReference>
<dbReference type="GO" id="GO:0045271">
    <property type="term" value="C:respiratory chain complex I"/>
    <property type="evidence" value="ECO:0000250"/>
    <property type="project" value="UniProtKB"/>
</dbReference>
<dbReference type="GO" id="GO:0008137">
    <property type="term" value="F:NADH dehydrogenase (ubiquinone) activity"/>
    <property type="evidence" value="ECO:0000250"/>
    <property type="project" value="UniProtKB"/>
</dbReference>
<dbReference type="GO" id="GO:0042773">
    <property type="term" value="P:ATP synthesis coupled electron transport"/>
    <property type="evidence" value="ECO:0007669"/>
    <property type="project" value="InterPro"/>
</dbReference>
<dbReference type="FunFam" id="1.10.287.3510:FF:000002">
    <property type="entry name" value="NADH-ubiquinone oxidoreductase chain 4L"/>
    <property type="match status" value="1"/>
</dbReference>
<dbReference type="Gene3D" id="1.10.287.3510">
    <property type="match status" value="1"/>
</dbReference>
<dbReference type="InterPro" id="IPR001133">
    <property type="entry name" value="NADH_UbQ_OxRdtase_chain4L/K"/>
</dbReference>
<dbReference type="InterPro" id="IPR039428">
    <property type="entry name" value="NUOK/Mnh_C1-like"/>
</dbReference>
<dbReference type="PANTHER" id="PTHR11434:SF0">
    <property type="entry name" value="NADH-UBIQUINONE OXIDOREDUCTASE CHAIN 4L"/>
    <property type="match status" value="1"/>
</dbReference>
<dbReference type="PANTHER" id="PTHR11434">
    <property type="entry name" value="NADH-UBIQUINONE OXIDOREDUCTASE SUBUNIT ND4L"/>
    <property type="match status" value="1"/>
</dbReference>
<dbReference type="Pfam" id="PF00420">
    <property type="entry name" value="Oxidored_q2"/>
    <property type="match status" value="1"/>
</dbReference>
<reference key="1">
    <citation type="journal article" date="2006" name="Mol. Phylogenet. Evol.">
        <title>Molecular systematics of Vampyressine bats (Phyllostomidae: Stenodermatinae) with comparison of direct and indirect surveys of mitochondrial DNA variation.</title>
        <authorList>
            <person name="Hoofer S.R."/>
            <person name="Baker R.J."/>
        </authorList>
    </citation>
    <scope>NUCLEOTIDE SEQUENCE [GENOMIC DNA]</scope>
</reference>
<sequence length="98" mass="10928">MSLTYMNMFMAFTISLLGLLLYRSHMMSSLLCLEGMMLSLFVMMTMVILNTHLTLASMIPIILLVFAACEAALGLSLLVMVSTTYGMDYVQNLNLLQC</sequence>
<organism>
    <name type="scientific">Platyrrhinus helleri</name>
    <name type="common">Heller's broad-nosed bat</name>
    <name type="synonym">Vampyrops helleri</name>
    <dbReference type="NCBI Taxonomy" id="27658"/>
    <lineage>
        <taxon>Eukaryota</taxon>
        <taxon>Metazoa</taxon>
        <taxon>Chordata</taxon>
        <taxon>Craniata</taxon>
        <taxon>Vertebrata</taxon>
        <taxon>Euteleostomi</taxon>
        <taxon>Mammalia</taxon>
        <taxon>Eutheria</taxon>
        <taxon>Laurasiatheria</taxon>
        <taxon>Chiroptera</taxon>
        <taxon>Yangochiroptera</taxon>
        <taxon>Phyllostomidae</taxon>
        <taxon>Stenodermatinae</taxon>
        <taxon>Platyrrhinus</taxon>
    </lineage>
</organism>
<feature type="chain" id="PRO_0000275104" description="NADH-ubiquinone oxidoreductase chain 4L">
    <location>
        <begin position="1"/>
        <end position="98"/>
    </location>
</feature>
<feature type="transmembrane region" description="Helical" evidence="3">
    <location>
        <begin position="1"/>
        <end position="21"/>
    </location>
</feature>
<feature type="transmembrane region" description="Helical" evidence="3">
    <location>
        <begin position="29"/>
        <end position="49"/>
    </location>
</feature>
<feature type="transmembrane region" description="Helical" evidence="3">
    <location>
        <begin position="61"/>
        <end position="81"/>
    </location>
</feature>
<keyword id="KW-0249">Electron transport</keyword>
<keyword id="KW-0472">Membrane</keyword>
<keyword id="KW-0496">Mitochondrion</keyword>
<keyword id="KW-0999">Mitochondrion inner membrane</keyword>
<keyword id="KW-0520">NAD</keyword>
<keyword id="KW-0679">Respiratory chain</keyword>
<keyword id="KW-1278">Translocase</keyword>
<keyword id="KW-0812">Transmembrane</keyword>
<keyword id="KW-1133">Transmembrane helix</keyword>
<keyword id="KW-0813">Transport</keyword>
<keyword id="KW-0830">Ubiquinone</keyword>
<proteinExistence type="inferred from homology"/>
<accession>Q1HV02</accession>
<gene>
    <name type="primary">MT-ND4L</name>
    <name type="synonym">MTND4L</name>
    <name type="synonym">NADH4L</name>
    <name type="synonym">ND4L</name>
</gene>
<protein>
    <recommendedName>
        <fullName>NADH-ubiquinone oxidoreductase chain 4L</fullName>
        <ecNumber>7.1.1.2</ecNumber>
    </recommendedName>
    <alternativeName>
        <fullName>NADH dehydrogenase subunit 4L</fullName>
    </alternativeName>
</protein>
<evidence type="ECO:0000250" key="1">
    <source>
        <dbReference type="UniProtKB" id="P03901"/>
    </source>
</evidence>
<evidence type="ECO:0000250" key="2">
    <source>
        <dbReference type="UniProtKB" id="P03902"/>
    </source>
</evidence>
<evidence type="ECO:0000255" key="3"/>
<evidence type="ECO:0000305" key="4"/>
<comment type="function">
    <text evidence="1">Core subunit of the mitochondrial membrane respiratory chain NADH dehydrogenase (Complex I) which catalyzes electron transfer from NADH through the respiratory chain, using ubiquinone as an electron acceptor. Part of the enzyme membrane arm which is embedded in the lipid bilayer and involved in proton translocation.</text>
</comment>
<comment type="catalytic activity">
    <reaction evidence="1">
        <text>a ubiquinone + NADH + 5 H(+)(in) = a ubiquinol + NAD(+) + 4 H(+)(out)</text>
        <dbReference type="Rhea" id="RHEA:29091"/>
        <dbReference type="Rhea" id="RHEA-COMP:9565"/>
        <dbReference type="Rhea" id="RHEA-COMP:9566"/>
        <dbReference type="ChEBI" id="CHEBI:15378"/>
        <dbReference type="ChEBI" id="CHEBI:16389"/>
        <dbReference type="ChEBI" id="CHEBI:17976"/>
        <dbReference type="ChEBI" id="CHEBI:57540"/>
        <dbReference type="ChEBI" id="CHEBI:57945"/>
        <dbReference type="EC" id="7.1.1.2"/>
    </reaction>
    <physiologicalReaction direction="left-to-right" evidence="1">
        <dbReference type="Rhea" id="RHEA:29092"/>
    </physiologicalReaction>
</comment>
<comment type="subunit">
    <text evidence="2">Core subunit of respiratory chain NADH dehydrogenase (Complex I) which is composed of 45 different subunits.</text>
</comment>
<comment type="subcellular location">
    <subcellularLocation>
        <location evidence="2">Mitochondrion inner membrane</location>
        <topology evidence="3">Multi-pass membrane protein</topology>
    </subcellularLocation>
</comment>
<comment type="similarity">
    <text evidence="4">Belongs to the complex I subunit 4L family.</text>
</comment>